<protein>
    <recommendedName>
        <fullName>DNA recombination protein RmuC homolog</fullName>
    </recommendedName>
</protein>
<proteinExistence type="inferred from homology"/>
<reference key="1">
    <citation type="journal article" date="2005" name="PLoS Biol.">
        <title>The genome sequence of Rickettsia felis identifies the first putative conjugative plasmid in an obligate intracellular parasite.</title>
        <authorList>
            <person name="Ogata H."/>
            <person name="Renesto P."/>
            <person name="Audic S."/>
            <person name="Robert C."/>
            <person name="Blanc G."/>
            <person name="Fournier P.-E."/>
            <person name="Parinello H."/>
            <person name="Claverie J.-M."/>
            <person name="Raoult D."/>
        </authorList>
    </citation>
    <scope>NUCLEOTIDE SEQUENCE [LARGE SCALE GENOMIC DNA]</scope>
    <source>
        <strain>ATCC VR-1525 / URRWXCal2</strain>
    </source>
</reference>
<sequence>MPYLLPITAAALLILLALIIWFYVKTKTFKTQLQFLSEQNLEISNNNQLLNQEKIGCLQKIEQLKCKVEYQEQTIKDSEKIREESFSSAKAALFDLGKDLSKQLIEIHKMENNAARELAEKNIATASGKFNSEFERLITMVGALNKDIEQSKGTVDLIKQSLLSPIGAGLLAEITLENILKSSGLRPNLDFIMQYGLTTTDSGKLRPDALIFLPSGNLMVIDSKASKFLVDEQDNSGNLSKTMNYHLKSLANKDYAENILTNLNKKDQNFNNVITLMFLPTEQAVEKVIAADPEFLQKAWSCNIFPVGPAGLMNMLSFAKFQITDHRRSENYKVIIEEVRKLLSSIGTMADYSQKIGNNLHNMVTNYDKFAASFNRNFMSRVKNIHKLGIDSGNKAMPAALERYQIVSSKSEIIEVEAENPPQIEEKL</sequence>
<comment type="function">
    <text evidence="1">Involved in DNA recombination.</text>
</comment>
<comment type="similarity">
    <text evidence="3">Belongs to the RmuC family.</text>
</comment>
<keyword id="KW-0175">Coiled coil</keyword>
<keyword id="KW-0233">DNA recombination</keyword>
<organism>
    <name type="scientific">Rickettsia felis (strain ATCC VR-1525 / URRWXCal2)</name>
    <name type="common">Rickettsia azadi</name>
    <dbReference type="NCBI Taxonomy" id="315456"/>
    <lineage>
        <taxon>Bacteria</taxon>
        <taxon>Pseudomonadati</taxon>
        <taxon>Pseudomonadota</taxon>
        <taxon>Alphaproteobacteria</taxon>
        <taxon>Rickettsiales</taxon>
        <taxon>Rickettsiaceae</taxon>
        <taxon>Rickettsieae</taxon>
        <taxon>Rickettsia</taxon>
        <taxon>spotted fever group</taxon>
    </lineage>
</organism>
<accession>Q4UMY2</accession>
<name>RMUC_RICFE</name>
<feature type="chain" id="PRO_0000286639" description="DNA recombination protein RmuC homolog">
    <location>
        <begin position="1"/>
        <end position="428"/>
    </location>
</feature>
<feature type="coiled-coil region" evidence="2">
    <location>
        <begin position="32"/>
        <end position="126"/>
    </location>
</feature>
<dbReference type="EMBL" id="CP000053">
    <property type="protein sequence ID" value="AAY61076.1"/>
    <property type="molecule type" value="Genomic_DNA"/>
</dbReference>
<dbReference type="SMR" id="Q4UMY2"/>
<dbReference type="STRING" id="315456.RF_0225"/>
<dbReference type="KEGG" id="rfe:RF_0225"/>
<dbReference type="eggNOG" id="COG1322">
    <property type="taxonomic scope" value="Bacteria"/>
</dbReference>
<dbReference type="HOGENOM" id="CLU_640725_0_0_5"/>
<dbReference type="OrthoDB" id="370725at2"/>
<dbReference type="Proteomes" id="UP000008548">
    <property type="component" value="Chromosome"/>
</dbReference>
<dbReference type="GO" id="GO:0006310">
    <property type="term" value="P:DNA recombination"/>
    <property type="evidence" value="ECO:0007669"/>
    <property type="project" value="UniProtKB-KW"/>
</dbReference>
<dbReference type="InterPro" id="IPR003798">
    <property type="entry name" value="DNA_recombination_RmuC"/>
</dbReference>
<dbReference type="PANTHER" id="PTHR30563">
    <property type="entry name" value="DNA RECOMBINATION PROTEIN RMUC"/>
    <property type="match status" value="1"/>
</dbReference>
<dbReference type="PANTHER" id="PTHR30563:SF0">
    <property type="entry name" value="DNA RECOMBINATION PROTEIN RMUC"/>
    <property type="match status" value="1"/>
</dbReference>
<dbReference type="Pfam" id="PF02646">
    <property type="entry name" value="RmuC"/>
    <property type="match status" value="1"/>
</dbReference>
<evidence type="ECO:0000250" key="1"/>
<evidence type="ECO:0000255" key="2"/>
<evidence type="ECO:0000305" key="3"/>
<gene>
    <name type="primary">rmuC</name>
    <name type="ordered locus">RF_0225</name>
</gene>